<comment type="function">
    <text evidence="6">Potentiates insulin signaling.</text>
</comment>
<comment type="PTM">
    <text evidence="1">Phosphorylated by INSR.</text>
</comment>
<comment type="sequence caution" evidence="7">
    <conflict type="frameshift">
        <sequence resource="EMBL-CDS" id="AAG18441"/>
    </conflict>
</comment>
<reference evidence="9" key="1">
    <citation type="submission" date="2004-06" db="EMBL/GenBank/DDBJ databases">
        <authorList>
            <consortium name="NIH - Xenopus Gene Collection (XGC) project"/>
        </authorList>
    </citation>
    <scope>NUCLEOTIDE SEQUENCE [LARGE SCALE MRNA]</scope>
    <source>
        <tissue evidence="9">Embryo</tissue>
    </source>
</reference>
<reference evidence="7 8" key="2">
    <citation type="journal article" date="1998" name="Mol. Endocrinol.">
        <title>A novel insulin receptor substrate protein, xIRS-u, potentiates insulin signaling: functional importance of its pleckstrin homology domain.</title>
        <authorList>
            <person name="Ohan N."/>
            <person name="Bayaa M."/>
            <person name="Kumar P."/>
            <person name="Zhu L."/>
            <person name="Liu X.J."/>
        </authorList>
    </citation>
    <scope>NUCLEOTIDE SEQUENCE [MRNA] OF 1-1071</scope>
    <scope>FUNCTION</scope>
    <source>
        <tissue evidence="6">Ovary</tissue>
    </source>
</reference>
<sequence length="1074" mass="117910">MAGVLCPTEEDRSSRAALRMLPPQPCPDESGAYRRMSGPTLSQVQEEPAAEPPQPPASAAEDDVRKRGYLRKQKHGHKRYFVLRSQSHLGPARLEYYDNEKKFRSGQRSGCHPKRVIPLYLCFTVSRRADAKNKHLVALYTKDEYFAMAAENEQEQDGWYQALSELINESKGACLDTEELEENYGTLRPGTVFKEVWQVNVKPRGLGQAKNLSGVYRLCLSSKAVHLVKLNSDVACVHLLLMNIRRCGHSENYFFIEVGRSSSTGAGELWMQVDDCVVAQHMHETFLDTMKALKAYSEFRPRSKSQSSCTNPISFITTRRYLGNLPPSQTGLQRRARTESMVGTPPSAKNNSFRFRTSSEGEGTMTRPFRSVTGSLSHLNTARINLGKQEGAGRYVRAPFNSGYQSRSASLPVSHFPSATSPISVCSSSGHGSASETLTRPSSSSVCGSPSDGGFISSDEYGSSPGDLRYFRVRSNTPDSLGNTPPIQEENTLSDYMSMSTHSQPDSRDDYMEADKCFRKRTYSLTKHTNSASKQKSQTAISLGEDSEEINKQFAFAESPKLKDSSLVDDYSNGVIDSVCNQSRSKASDDGYMPMMPSNLYDSDYLPMAPKTVSAPKQINRCPSQADSKGYMMMFPINSSPVKNVFGGAATKSNLEKLSNGGYMDMSYGNSTKQIHDSNLNNNSRGLSSYFSLPRSFKSLTKQTTDQNEYVPMSSPGKLLHLGAENGVDVCKDGAVHDIAKIELKSSSSILDQQVKRPNKLTLGIRGSNTIPRMFDHSAPAEPTSPGEYINIDFSDKASSTPYSLSADGSPSSLGSSCDHRQSPLSDYMSVDIDVQSPKATAEQSNSLTDISLYACTVVSRMQPNAEYAKLPCGTACVSKTDNIMDDYTTMTFNMAMTPPRSFASETENGTKVDSPSSIVNRLCIGELTSLNSGFSLPNPLPEPIAGPKVIRADSQGRRRHSSETFASSSTVTTSSSCFTESGKRHSSASFDNVWLKPDENSCEQENKMSRHCSTGFQNGLNYISLSMHNGVCEPTSPDCHQHQNGSRNLESGGYVSIDFTRCDCLKCPTSRKD</sequence>
<keyword id="KW-0597">Phosphoprotein</keyword>
<keyword id="KW-1185">Reference proteome</keyword>
<keyword id="KW-0677">Repeat</keyword>
<keyword id="KW-0807">Transducer</keyword>
<accession>Q9DF49</accession>
<accession>Q6GQH6</accession>
<name>IRS2A_XENLA</name>
<feature type="chain" id="PRO_0000076225" description="Insulin receptor substrate 2-A">
    <location>
        <begin position="1"/>
        <end position="1074"/>
    </location>
</feature>
<feature type="domain" description="PH" evidence="3">
    <location>
        <begin position="63"/>
        <end position="168"/>
    </location>
</feature>
<feature type="domain" description="IRS-type PTB" evidence="4">
    <location>
        <begin position="193"/>
        <end position="297"/>
    </location>
</feature>
<feature type="region of interest" description="Disordered" evidence="5">
    <location>
        <begin position="1"/>
        <end position="64"/>
    </location>
</feature>
<feature type="region of interest" description="Disordered" evidence="5">
    <location>
        <begin position="326"/>
        <end position="370"/>
    </location>
</feature>
<feature type="region of interest" description="Disordered" evidence="5">
    <location>
        <begin position="426"/>
        <end position="461"/>
    </location>
</feature>
<feature type="region of interest" description="Disordered" evidence="5">
    <location>
        <begin position="475"/>
        <end position="510"/>
    </location>
</feature>
<feature type="region of interest" description="Disordered" evidence="5">
    <location>
        <begin position="801"/>
        <end position="821"/>
    </location>
</feature>
<feature type="short sequence motif" description="YXXM motif 1" evidence="2">
    <location>
        <begin position="33"/>
        <end position="36"/>
    </location>
</feature>
<feature type="short sequence motif" description="YXXM motif 2" evidence="2">
    <location>
        <begin position="145"/>
        <end position="148"/>
    </location>
</feature>
<feature type="short sequence motif" description="YXXM motif 3" evidence="2">
    <location>
        <begin position="496"/>
        <end position="499"/>
    </location>
</feature>
<feature type="short sequence motif" description="YXXM motif 4" evidence="2">
    <location>
        <begin position="592"/>
        <end position="595"/>
    </location>
</feature>
<feature type="short sequence motif" description="YXXM motif 5" evidence="2">
    <location>
        <begin position="605"/>
        <end position="608"/>
    </location>
</feature>
<feature type="short sequence motif" description="YXXM motif 6" evidence="2">
    <location>
        <begin position="631"/>
        <end position="634"/>
    </location>
</feature>
<feature type="short sequence motif" description="YXXM motif 7" evidence="2">
    <location>
        <begin position="663"/>
        <end position="666"/>
    </location>
</feature>
<feature type="short sequence motif" description="YXXM motif 8" evidence="2">
    <location>
        <begin position="710"/>
        <end position="713"/>
    </location>
</feature>
<feature type="short sequence motif" description="YXXM motif 9" evidence="2">
    <location>
        <begin position="888"/>
        <end position="891"/>
    </location>
</feature>
<feature type="compositionally biased region" description="Polar residues" evidence="5">
    <location>
        <begin position="347"/>
        <end position="361"/>
    </location>
</feature>
<feature type="compositionally biased region" description="Low complexity" evidence="5">
    <location>
        <begin position="426"/>
        <end position="435"/>
    </location>
</feature>
<feature type="compositionally biased region" description="Low complexity" evidence="5">
    <location>
        <begin position="442"/>
        <end position="454"/>
    </location>
</feature>
<feature type="compositionally biased region" description="Polar residues" evidence="5">
    <location>
        <begin position="475"/>
        <end position="504"/>
    </location>
</feature>
<feature type="compositionally biased region" description="Low complexity" evidence="5">
    <location>
        <begin position="804"/>
        <end position="817"/>
    </location>
</feature>
<feature type="sequence conflict" description="In Ref. 2; AAG18441." evidence="7" ref="2">
    <original>A</original>
    <variation>P</variation>
    <location>
        <position position="398"/>
    </location>
</feature>
<feature type="sequence conflict" description="In Ref. 2; AAG18441." evidence="7" ref="2">
    <original>S</original>
    <variation>I</variation>
    <location>
        <position position="475"/>
    </location>
</feature>
<feature type="sequence conflict" description="In Ref. 2; AAG18441." evidence="7" ref="2">
    <original>S</original>
    <variation>N</variation>
    <location>
        <position position="785"/>
    </location>
</feature>
<feature type="sequence conflict" description="In Ref. 2." evidence="7" ref="2">
    <original>S</original>
    <variation>Y</variation>
    <location>
        <position position="1027"/>
    </location>
</feature>
<feature type="sequence conflict" description="In Ref. 2." evidence="7" ref="2">
    <original>S</original>
    <variation>I</variation>
    <location>
        <position position="1047"/>
    </location>
</feature>
<feature type="sequence conflict" description="In Ref. 2." evidence="7" ref="2">
    <original>SG</original>
    <variation>NW</variation>
    <location>
        <begin position="1052"/>
        <end position="1053"/>
    </location>
</feature>
<feature type="sequence conflict" description="In Ref. 2." evidence="7" ref="2">
    <original>RCD</original>
    <variation>SVN</variation>
    <location>
        <begin position="1062"/>
        <end position="1064"/>
    </location>
</feature>
<organism>
    <name type="scientific">Xenopus laevis</name>
    <name type="common">African clawed frog</name>
    <dbReference type="NCBI Taxonomy" id="8355"/>
    <lineage>
        <taxon>Eukaryota</taxon>
        <taxon>Metazoa</taxon>
        <taxon>Chordata</taxon>
        <taxon>Craniata</taxon>
        <taxon>Vertebrata</taxon>
        <taxon>Euteleostomi</taxon>
        <taxon>Amphibia</taxon>
        <taxon>Batrachia</taxon>
        <taxon>Anura</taxon>
        <taxon>Pipoidea</taxon>
        <taxon>Pipidae</taxon>
        <taxon>Xenopodinae</taxon>
        <taxon>Xenopus</taxon>
        <taxon>Xenopus</taxon>
    </lineage>
</organism>
<proteinExistence type="evidence at transcript level"/>
<dbReference type="EMBL" id="BC072768">
    <property type="protein sequence ID" value="AAH72768.1"/>
    <property type="molecule type" value="mRNA"/>
</dbReference>
<dbReference type="EMBL" id="AF297960">
    <property type="protein sequence ID" value="AAG18441.1"/>
    <property type="status" value="ALT_FRAME"/>
    <property type="molecule type" value="mRNA"/>
</dbReference>
<dbReference type="RefSeq" id="NP_001084242.1">
    <property type="nucleotide sequence ID" value="NM_001090773.1"/>
</dbReference>
<dbReference type="SMR" id="Q9DF49"/>
<dbReference type="DNASU" id="399388"/>
<dbReference type="GeneID" id="399388"/>
<dbReference type="KEGG" id="xla:399388"/>
<dbReference type="AGR" id="Xenbase:XB-GENE-865320"/>
<dbReference type="CTD" id="399388"/>
<dbReference type="Xenbase" id="XB-GENE-865320">
    <property type="gene designation" value="irs4.S"/>
</dbReference>
<dbReference type="OrthoDB" id="946068at2759"/>
<dbReference type="Proteomes" id="UP000186698">
    <property type="component" value="Chromosome 8S"/>
</dbReference>
<dbReference type="Bgee" id="399388">
    <property type="expression patterns" value="Expressed in testis and 19 other cell types or tissues"/>
</dbReference>
<dbReference type="GO" id="GO:0005737">
    <property type="term" value="C:cytoplasm"/>
    <property type="evidence" value="ECO:0000250"/>
    <property type="project" value="UniProtKB"/>
</dbReference>
<dbReference type="GO" id="GO:0005829">
    <property type="term" value="C:cytosol"/>
    <property type="evidence" value="ECO:0000318"/>
    <property type="project" value="GO_Central"/>
</dbReference>
<dbReference type="GO" id="GO:0043231">
    <property type="term" value="C:intracellular membrane-bounded organelle"/>
    <property type="evidence" value="ECO:0000250"/>
    <property type="project" value="UniProtKB"/>
</dbReference>
<dbReference type="GO" id="GO:0005634">
    <property type="term" value="C:nucleus"/>
    <property type="evidence" value="ECO:0000250"/>
    <property type="project" value="UniProtKB"/>
</dbReference>
<dbReference type="GO" id="GO:0005886">
    <property type="term" value="C:plasma membrane"/>
    <property type="evidence" value="ECO:0000318"/>
    <property type="project" value="GO_Central"/>
</dbReference>
<dbReference type="GO" id="GO:0005158">
    <property type="term" value="F:insulin receptor binding"/>
    <property type="evidence" value="ECO:0000250"/>
    <property type="project" value="UniProtKB"/>
</dbReference>
<dbReference type="GO" id="GO:0005159">
    <property type="term" value="F:insulin-like growth factor receptor binding"/>
    <property type="evidence" value="ECO:0000250"/>
    <property type="project" value="UniProtKB"/>
</dbReference>
<dbReference type="GO" id="GO:0043548">
    <property type="term" value="F:phosphatidylinositol 3-kinase binding"/>
    <property type="evidence" value="ECO:0000318"/>
    <property type="project" value="GO_Central"/>
</dbReference>
<dbReference type="GO" id="GO:0042169">
    <property type="term" value="F:SH2 domain binding"/>
    <property type="evidence" value="ECO:0000250"/>
    <property type="project" value="UniProtKB"/>
</dbReference>
<dbReference type="GO" id="GO:0008286">
    <property type="term" value="P:insulin receptor signaling pathway"/>
    <property type="evidence" value="ECO:0000314"/>
    <property type="project" value="UniProtKB"/>
</dbReference>
<dbReference type="GO" id="GO:0048009">
    <property type="term" value="P:insulin-like growth factor receptor signaling pathway"/>
    <property type="evidence" value="ECO:0000250"/>
    <property type="project" value="UniProtKB"/>
</dbReference>
<dbReference type="CDD" id="cd01257">
    <property type="entry name" value="PH_IRS"/>
    <property type="match status" value="1"/>
</dbReference>
<dbReference type="CDD" id="cd01204">
    <property type="entry name" value="PTB_IRS"/>
    <property type="match status" value="1"/>
</dbReference>
<dbReference type="FunFam" id="2.30.29.30:FF:000029">
    <property type="entry name" value="Insulin receptor substrate 1"/>
    <property type="match status" value="1"/>
</dbReference>
<dbReference type="Gene3D" id="2.30.29.30">
    <property type="entry name" value="Pleckstrin-homology domain (PH domain)/Phosphotyrosine-binding domain (PTB)"/>
    <property type="match status" value="2"/>
</dbReference>
<dbReference type="InterPro" id="IPR039011">
    <property type="entry name" value="IRS"/>
</dbReference>
<dbReference type="InterPro" id="IPR002404">
    <property type="entry name" value="IRS_PTB"/>
</dbReference>
<dbReference type="InterPro" id="IPR011993">
    <property type="entry name" value="PH-like_dom_sf"/>
</dbReference>
<dbReference type="InterPro" id="IPR001849">
    <property type="entry name" value="PH_domain"/>
</dbReference>
<dbReference type="PANTHER" id="PTHR10614">
    <property type="entry name" value="INSULIN RECEPTOR SUBSTRATE"/>
    <property type="match status" value="1"/>
</dbReference>
<dbReference type="PANTHER" id="PTHR10614:SF2">
    <property type="entry name" value="INSULIN RECEPTOR SUBSTRATE 4"/>
    <property type="match status" value="1"/>
</dbReference>
<dbReference type="Pfam" id="PF02174">
    <property type="entry name" value="IRS"/>
    <property type="match status" value="1"/>
</dbReference>
<dbReference type="Pfam" id="PF00169">
    <property type="entry name" value="PH"/>
    <property type="match status" value="1"/>
</dbReference>
<dbReference type="PRINTS" id="PR00628">
    <property type="entry name" value="INSULINRSI"/>
</dbReference>
<dbReference type="SMART" id="SM01244">
    <property type="entry name" value="IRS"/>
    <property type="match status" value="1"/>
</dbReference>
<dbReference type="SMART" id="SM00233">
    <property type="entry name" value="PH"/>
    <property type="match status" value="1"/>
</dbReference>
<dbReference type="SMART" id="SM00310">
    <property type="entry name" value="PTBI"/>
    <property type="match status" value="1"/>
</dbReference>
<dbReference type="SUPFAM" id="SSF50729">
    <property type="entry name" value="PH domain-like"/>
    <property type="match status" value="2"/>
</dbReference>
<dbReference type="PROSITE" id="PS51064">
    <property type="entry name" value="IRS_PTB"/>
    <property type="match status" value="1"/>
</dbReference>
<dbReference type="PROSITE" id="PS50003">
    <property type="entry name" value="PH_DOMAIN"/>
    <property type="match status" value="1"/>
</dbReference>
<protein>
    <recommendedName>
        <fullName>Insulin receptor substrate 2-A</fullName>
        <shortName>IRS-2-A</shortName>
    </recommendedName>
    <alternativeName>
        <fullName>Insulin receptor substrate-undetermined designation</fullName>
    </alternativeName>
    <alternativeName>
        <fullName>Insulin receptor substrate-unique</fullName>
        <shortName>xIRS-u</shortName>
    </alternativeName>
</protein>
<gene>
    <name type="primary">irs2-a</name>
    <name type="synonym">irsu</name>
</gene>
<evidence type="ECO:0000250" key="1"/>
<evidence type="ECO:0000255" key="2"/>
<evidence type="ECO:0000255" key="3">
    <source>
        <dbReference type="PROSITE-ProRule" id="PRU00145"/>
    </source>
</evidence>
<evidence type="ECO:0000255" key="4">
    <source>
        <dbReference type="PROSITE-ProRule" id="PRU00389"/>
    </source>
</evidence>
<evidence type="ECO:0000256" key="5">
    <source>
        <dbReference type="SAM" id="MobiDB-lite"/>
    </source>
</evidence>
<evidence type="ECO:0000269" key="6">
    <source>
    </source>
</evidence>
<evidence type="ECO:0000305" key="7"/>
<evidence type="ECO:0000312" key="8">
    <source>
        <dbReference type="EMBL" id="AAG18441.1"/>
    </source>
</evidence>
<evidence type="ECO:0000312" key="9">
    <source>
        <dbReference type="EMBL" id="AAH72768.1"/>
    </source>
</evidence>